<comment type="function">
    <text>Interconversion of serine and glycine.</text>
</comment>
<comment type="catalytic activity">
    <reaction>
        <text>(6R)-5,10-methylene-5,6,7,8-tetrahydrofolate + glycine + H2O = (6S)-5,6,7,8-tetrahydrofolate + L-serine</text>
        <dbReference type="Rhea" id="RHEA:15481"/>
        <dbReference type="ChEBI" id="CHEBI:15377"/>
        <dbReference type="ChEBI" id="CHEBI:15636"/>
        <dbReference type="ChEBI" id="CHEBI:33384"/>
        <dbReference type="ChEBI" id="CHEBI:57305"/>
        <dbReference type="ChEBI" id="CHEBI:57453"/>
        <dbReference type="EC" id="2.1.2.1"/>
    </reaction>
</comment>
<comment type="cofactor">
    <cofactor evidence="1">
        <name>pyridoxal 5'-phosphate</name>
        <dbReference type="ChEBI" id="CHEBI:597326"/>
    </cofactor>
</comment>
<comment type="pathway">
    <text>One-carbon metabolism; tetrahydrofolate interconversion.</text>
</comment>
<comment type="subunit">
    <text evidence="1">Homotetramer.</text>
</comment>
<comment type="subcellular location">
    <subcellularLocation>
        <location evidence="3">Cytoplasm</location>
    </subcellularLocation>
</comment>
<comment type="miscellaneous">
    <text>In eukaryotes there are two forms of the enzymes: a cytosolic one and a mitochondrial one.</text>
</comment>
<comment type="miscellaneous">
    <text>Has antigenic properties.</text>
</comment>
<comment type="similarity">
    <text evidence="4">Belongs to the SHMT family.</text>
</comment>
<organism>
    <name type="scientific">Candida albicans (strain SC5314 / ATCC MYA-2876)</name>
    <name type="common">Yeast</name>
    <dbReference type="NCBI Taxonomy" id="237561"/>
    <lineage>
        <taxon>Eukaryota</taxon>
        <taxon>Fungi</taxon>
        <taxon>Dikarya</taxon>
        <taxon>Ascomycota</taxon>
        <taxon>Saccharomycotina</taxon>
        <taxon>Pichiomycetes</taxon>
        <taxon>Debaryomycetaceae</taxon>
        <taxon>Candida/Lodderomyces clade</taxon>
        <taxon>Candida</taxon>
    </lineage>
</organism>
<evidence type="ECO:0000250" key="1"/>
<evidence type="ECO:0000256" key="2">
    <source>
        <dbReference type="SAM" id="MobiDB-lite"/>
    </source>
</evidence>
<evidence type="ECO:0000269" key="3">
    <source>
    </source>
</evidence>
<evidence type="ECO:0000305" key="4"/>
<dbReference type="EC" id="2.1.2.1"/>
<dbReference type="EMBL" id="AF009966">
    <property type="protein sequence ID" value="AAB64197.1"/>
    <property type="molecule type" value="Genomic_DNA"/>
</dbReference>
<dbReference type="EMBL" id="CP017628">
    <property type="protein sequence ID" value="AOW30303.1"/>
    <property type="molecule type" value="Genomic_DNA"/>
</dbReference>
<dbReference type="RefSeq" id="XP_718086.1">
    <property type="nucleotide sequence ID" value="XM_712993.1"/>
</dbReference>
<dbReference type="SMR" id="O13426"/>
<dbReference type="FunCoup" id="O13426">
    <property type="interactions" value="927"/>
</dbReference>
<dbReference type="STRING" id="237561.O13426"/>
<dbReference type="iPTMnet" id="O13426"/>
<dbReference type="EnsemblFungi" id="C6_03760C_A-T">
    <property type="protein sequence ID" value="C6_03760C_A-T-p1"/>
    <property type="gene ID" value="C6_03760C_A"/>
</dbReference>
<dbReference type="GeneID" id="3640306"/>
<dbReference type="KEGG" id="cal:CAALFM_C603760CA"/>
<dbReference type="CGD" id="CAL0000189123">
    <property type="gene designation" value="SHM2"/>
</dbReference>
<dbReference type="VEuPathDB" id="FungiDB:C6_03760C_A"/>
<dbReference type="eggNOG" id="KOG2467">
    <property type="taxonomic scope" value="Eukaryota"/>
</dbReference>
<dbReference type="HOGENOM" id="CLU_022477_0_1_1"/>
<dbReference type="InParanoid" id="O13426"/>
<dbReference type="OMA" id="CQFANVQ"/>
<dbReference type="OrthoDB" id="10265628at2759"/>
<dbReference type="UniPathway" id="UPA00193"/>
<dbReference type="PRO" id="PR:O13426"/>
<dbReference type="Proteomes" id="UP000000559">
    <property type="component" value="Chromosome 6"/>
</dbReference>
<dbReference type="GO" id="GO:0005737">
    <property type="term" value="C:cytoplasm"/>
    <property type="evidence" value="ECO:0000318"/>
    <property type="project" value="GO_Central"/>
</dbReference>
<dbReference type="GO" id="GO:0005739">
    <property type="term" value="C:mitochondrion"/>
    <property type="evidence" value="ECO:0000318"/>
    <property type="project" value="GO_Central"/>
</dbReference>
<dbReference type="GO" id="GO:0004372">
    <property type="term" value="F:glycine hydroxymethyltransferase activity"/>
    <property type="evidence" value="ECO:0000318"/>
    <property type="project" value="GO_Central"/>
</dbReference>
<dbReference type="GO" id="GO:0030170">
    <property type="term" value="F:pyridoxal phosphate binding"/>
    <property type="evidence" value="ECO:0000318"/>
    <property type="project" value="GO_Central"/>
</dbReference>
<dbReference type="GO" id="GO:0019264">
    <property type="term" value="P:glycine biosynthetic process from serine"/>
    <property type="evidence" value="ECO:0000318"/>
    <property type="project" value="GO_Central"/>
</dbReference>
<dbReference type="GO" id="GO:0035999">
    <property type="term" value="P:tetrahydrofolate interconversion"/>
    <property type="evidence" value="ECO:0007669"/>
    <property type="project" value="UniProtKB-UniPathway"/>
</dbReference>
<dbReference type="GO" id="GO:0046653">
    <property type="term" value="P:tetrahydrofolate metabolic process"/>
    <property type="evidence" value="ECO:0000318"/>
    <property type="project" value="GO_Central"/>
</dbReference>
<dbReference type="CDD" id="cd00378">
    <property type="entry name" value="SHMT"/>
    <property type="match status" value="1"/>
</dbReference>
<dbReference type="FunFam" id="3.40.640.10:FF:000097">
    <property type="entry name" value="Serine hydroxymethyltransferase"/>
    <property type="match status" value="1"/>
</dbReference>
<dbReference type="Gene3D" id="3.90.1150.10">
    <property type="entry name" value="Aspartate Aminotransferase, domain 1"/>
    <property type="match status" value="1"/>
</dbReference>
<dbReference type="Gene3D" id="3.40.640.10">
    <property type="entry name" value="Type I PLP-dependent aspartate aminotransferase-like (Major domain)"/>
    <property type="match status" value="1"/>
</dbReference>
<dbReference type="HAMAP" id="MF_00051">
    <property type="entry name" value="SHMT"/>
    <property type="match status" value="1"/>
</dbReference>
<dbReference type="InterPro" id="IPR015424">
    <property type="entry name" value="PyrdxlP-dep_Trfase"/>
</dbReference>
<dbReference type="InterPro" id="IPR015421">
    <property type="entry name" value="PyrdxlP-dep_Trfase_major"/>
</dbReference>
<dbReference type="InterPro" id="IPR015422">
    <property type="entry name" value="PyrdxlP-dep_Trfase_small"/>
</dbReference>
<dbReference type="InterPro" id="IPR001085">
    <property type="entry name" value="Ser_HO-MeTrfase"/>
</dbReference>
<dbReference type="InterPro" id="IPR049943">
    <property type="entry name" value="Ser_HO-MeTrfase-like"/>
</dbReference>
<dbReference type="InterPro" id="IPR019798">
    <property type="entry name" value="Ser_HO-MeTrfase_PLP_BS"/>
</dbReference>
<dbReference type="InterPro" id="IPR039429">
    <property type="entry name" value="SHMT-like_dom"/>
</dbReference>
<dbReference type="NCBIfam" id="NF000586">
    <property type="entry name" value="PRK00011.1"/>
    <property type="match status" value="1"/>
</dbReference>
<dbReference type="PANTHER" id="PTHR11680">
    <property type="entry name" value="SERINE HYDROXYMETHYLTRANSFERASE"/>
    <property type="match status" value="1"/>
</dbReference>
<dbReference type="PANTHER" id="PTHR11680:SF28">
    <property type="entry name" value="SERINE HYDROXYMETHYLTRANSFERASE, MITOCHONDRIAL"/>
    <property type="match status" value="1"/>
</dbReference>
<dbReference type="Pfam" id="PF00464">
    <property type="entry name" value="SHMT"/>
    <property type="match status" value="1"/>
</dbReference>
<dbReference type="PIRSF" id="PIRSF000412">
    <property type="entry name" value="SHMT"/>
    <property type="match status" value="1"/>
</dbReference>
<dbReference type="SUPFAM" id="SSF53383">
    <property type="entry name" value="PLP-dependent transferases"/>
    <property type="match status" value="1"/>
</dbReference>
<dbReference type="PROSITE" id="PS00096">
    <property type="entry name" value="SHMT"/>
    <property type="match status" value="1"/>
</dbReference>
<feature type="initiator methionine" description="Removed" evidence="3">
    <location>
        <position position="1"/>
    </location>
</feature>
<feature type="chain" id="PRO_0000113511" description="Serine hydroxymethyltransferase, cytosolic">
    <location>
        <begin position="2"/>
        <end position="470"/>
    </location>
</feature>
<feature type="region of interest" description="Disordered" evidence="2">
    <location>
        <begin position="1"/>
        <end position="23"/>
    </location>
</feature>
<feature type="compositionally biased region" description="Polar residues" evidence="2">
    <location>
        <begin position="1"/>
        <end position="11"/>
    </location>
</feature>
<feature type="compositionally biased region" description="Basic and acidic residues" evidence="2">
    <location>
        <begin position="12"/>
        <end position="23"/>
    </location>
</feature>
<feature type="modified residue" description="N-acetylserine" evidence="3">
    <location>
        <position position="2"/>
    </location>
</feature>
<feature type="modified residue" description="N6-(pyridoxal phosphate)lysine" evidence="1">
    <location>
        <position position="249"/>
    </location>
</feature>
<feature type="sequence conflict" description="In Ref. 1; AAB64197." evidence="4" ref="1">
    <original>D</original>
    <variation>H</variation>
    <location>
        <position position="82"/>
    </location>
</feature>
<sequence>MSAYALSQSHRQLTEGHLKDTDPEVDQIIKDEIDRQQHSIVLIASENFTTTAVFDALGTPMCNKYSEGYPGARYYGGNEHIDRMELLCQERALKAFGLTPDKWGVNVQTLSGSPANLQVYQAIMKPHERLMGLDLPHGGHLSHGYQTDSRKISAVSTYFETMPYRVDLETGLIDYDMLEKTAVLYRPKVLVAGTSAYCRLIDYKRMREIADKVGAYLVVDMAHISGLIAAGVIPSPFEYADIVTTTTHKSLRGPRGAMIFFRRGVRSVNPKTGQEILYDLENPINFSVFPGHQGGPHNHTIAALATALKQANTPEFKEYQEQVLKNAKALESEFTKKGYKLVSDGTDSHMVLVSLKDKQIDGARVETVCEKINIALNKNSIPGDKSALVPGGVRIGAPAMTTRGLGEEDFKKIVSYIDFAVNYAKEVQSQLPKDANKLKDFKNAVSGDSEKLKAVRDEIYQWAGSFPLAV</sequence>
<name>GLYC_CANAL</name>
<accession>O13426</accession>
<accession>A0A1D8PQ92</accession>
<accession>Q5A8J8</accession>
<gene>
    <name type="primary">SHM2</name>
    <name type="ordered locus">CAALFM_C603760CA</name>
    <name type="ORF">CaO19.13173</name>
    <name type="ORF">CaO19.5750</name>
</gene>
<keyword id="KW-0007">Acetylation</keyword>
<keyword id="KW-0963">Cytoplasm</keyword>
<keyword id="KW-0903">Direct protein sequencing</keyword>
<keyword id="KW-0554">One-carbon metabolism</keyword>
<keyword id="KW-0663">Pyridoxal phosphate</keyword>
<keyword id="KW-1185">Reference proteome</keyword>
<keyword id="KW-0808">Transferase</keyword>
<reference key="1">
    <citation type="journal article" date="2000" name="Yeast">
        <title>Glycine metabolism in Candida albicans: characterization of the serine hydroxymethyltransferase (SHM1, SHM2) and threonine aldolase (GLY1) genes.</title>
        <authorList>
            <person name="McNeil J.B."/>
            <person name="Flynn J."/>
            <person name="Tsao N."/>
            <person name="Monschau N."/>
            <person name="Stahmann K."/>
            <person name="Haynes R.H."/>
            <person name="McIntosh E.M."/>
            <person name="Pearlman R.E."/>
        </authorList>
    </citation>
    <scope>NUCLEOTIDE SEQUENCE [GENOMIC DNA]</scope>
</reference>
<reference key="2">
    <citation type="journal article" date="2004" name="Proc. Natl. Acad. Sci. U.S.A.">
        <title>The diploid genome sequence of Candida albicans.</title>
        <authorList>
            <person name="Jones T."/>
            <person name="Federspiel N.A."/>
            <person name="Chibana H."/>
            <person name="Dungan J."/>
            <person name="Kalman S."/>
            <person name="Magee B.B."/>
            <person name="Newport G."/>
            <person name="Thorstenson Y.R."/>
            <person name="Agabian N."/>
            <person name="Magee P.T."/>
            <person name="Davis R.W."/>
            <person name="Scherer S."/>
        </authorList>
    </citation>
    <scope>NUCLEOTIDE SEQUENCE [LARGE SCALE GENOMIC DNA]</scope>
    <source>
        <strain>SC5314 / ATCC MYA-2876</strain>
    </source>
</reference>
<reference key="3">
    <citation type="journal article" date="2007" name="Genome Biol.">
        <title>Assembly of the Candida albicans genome into sixteen supercontigs aligned on the eight chromosomes.</title>
        <authorList>
            <person name="van het Hoog M."/>
            <person name="Rast T.J."/>
            <person name="Martchenko M."/>
            <person name="Grindle S."/>
            <person name="Dignard D."/>
            <person name="Hogues H."/>
            <person name="Cuomo C."/>
            <person name="Berriman M."/>
            <person name="Scherer S."/>
            <person name="Magee B.B."/>
            <person name="Whiteway M."/>
            <person name="Chibana H."/>
            <person name="Nantel A."/>
            <person name="Magee P.T."/>
        </authorList>
    </citation>
    <scope>GENOME REANNOTATION</scope>
    <source>
        <strain>SC5314 / ATCC MYA-2876</strain>
    </source>
</reference>
<reference key="4">
    <citation type="journal article" date="2013" name="Genome Biol.">
        <title>Assembly of a phased diploid Candida albicans genome facilitates allele-specific measurements and provides a simple model for repeat and indel structure.</title>
        <authorList>
            <person name="Muzzey D."/>
            <person name="Schwartz K."/>
            <person name="Weissman J.S."/>
            <person name="Sherlock G."/>
        </authorList>
    </citation>
    <scope>NUCLEOTIDE SEQUENCE [LARGE SCALE GENOMIC DNA]</scope>
    <scope>GENOME REANNOTATION</scope>
    <source>
        <strain>SC5314 / ATCC MYA-2876</strain>
    </source>
</reference>
<reference key="5">
    <citation type="journal article" date="2004" name="Proteomics">
        <title>Proteomics-based identification of novel Candida albicans antigens for diagnosis of systemic candidiasis in patients with underlying hematological malignancies.</title>
        <authorList>
            <person name="Pitarch A."/>
            <person name="Abian J."/>
            <person name="Carrascal M."/>
            <person name="Sanchez M."/>
            <person name="Nombela C."/>
            <person name="Gil C."/>
        </authorList>
    </citation>
    <scope>PROTEIN SEQUENCE OF 2-11 AND 191-199</scope>
    <scope>ACETYLATION AT SER-2</scope>
    <scope>SUBCELLULAR LOCATION</scope>
    <scope>ANTIGENICITY</scope>
    <source>
        <strain>SC5314 / ATCC MYA-2876</strain>
        <tissue>Protoplast</tissue>
    </source>
</reference>
<proteinExistence type="evidence at protein level"/>
<protein>
    <recommendedName>
        <fullName>Serine hydroxymethyltransferase, cytosolic</fullName>
        <shortName>SHMT</shortName>
        <ecNumber>2.1.2.1</ecNumber>
    </recommendedName>
    <alternativeName>
        <fullName>Glycine hydroxymethyltransferase</fullName>
    </alternativeName>
    <alternativeName>
        <fullName>SHMII</fullName>
    </alternativeName>
    <alternativeName>
        <fullName>Serine methylase</fullName>
    </alternativeName>
</protein>